<proteinExistence type="inferred from homology"/>
<evidence type="ECO:0000255" key="1">
    <source>
        <dbReference type="HAMAP-Rule" id="MF_00394"/>
    </source>
</evidence>
<sequence>MKIAVAGGGSWGSALAHLLAANACDVTLLVRDAVQARRINADHVNPDYLPDVVLHSSVRATVDDAEALDGAGLLLMAVPCQHFRKVLQRLRPLLPPEPVVVCANKGIEVENLCTVSEVVAQELEGTGHTFAMLSGPSFAVEVMRDMPTAVVLGCRDAATGRRLRHIFSYGLFRTYSSTDVRGVELGGAVKNVIAIAAGLADGLGFGHNARAALITRGLAEMSRLGVAMGARASTFMGLSGMGDLVLTCTGDLSRNRQVGLKLAQGMTLEEVTRSMRMVAEGVKTTEAVHTLAARLQVDLPITSAMYDVLHSGKNPRDAVRELMSRELKEE</sequence>
<protein>
    <recommendedName>
        <fullName evidence="1">Glycerol-3-phosphate dehydrogenase [NAD(P)+]</fullName>
        <ecNumber evidence="1">1.1.1.94</ecNumber>
    </recommendedName>
    <alternativeName>
        <fullName evidence="1">NAD(P)(+)-dependent glycerol-3-phosphate dehydrogenase</fullName>
    </alternativeName>
    <alternativeName>
        <fullName evidence="1">NAD(P)H-dependent dihydroxyacetone-phosphate reductase</fullName>
    </alternativeName>
</protein>
<dbReference type="EC" id="1.1.1.94" evidence="1"/>
<dbReference type="EMBL" id="CP000112">
    <property type="protein sequence ID" value="ABB39972.1"/>
    <property type="molecule type" value="Genomic_DNA"/>
</dbReference>
<dbReference type="RefSeq" id="WP_011368926.1">
    <property type="nucleotide sequence ID" value="NC_007519.1"/>
</dbReference>
<dbReference type="SMR" id="Q30WH4"/>
<dbReference type="STRING" id="207559.Dde_3178"/>
<dbReference type="KEGG" id="dde:Dde_3178"/>
<dbReference type="eggNOG" id="COG0240">
    <property type="taxonomic scope" value="Bacteria"/>
</dbReference>
<dbReference type="HOGENOM" id="CLU_033449_0_2_7"/>
<dbReference type="UniPathway" id="UPA00940"/>
<dbReference type="Proteomes" id="UP000002710">
    <property type="component" value="Chromosome"/>
</dbReference>
<dbReference type="GO" id="GO:0005829">
    <property type="term" value="C:cytosol"/>
    <property type="evidence" value="ECO:0007669"/>
    <property type="project" value="TreeGrafter"/>
</dbReference>
<dbReference type="GO" id="GO:0047952">
    <property type="term" value="F:glycerol-3-phosphate dehydrogenase [NAD(P)+] activity"/>
    <property type="evidence" value="ECO:0007669"/>
    <property type="project" value="UniProtKB-UniRule"/>
</dbReference>
<dbReference type="GO" id="GO:0051287">
    <property type="term" value="F:NAD binding"/>
    <property type="evidence" value="ECO:0007669"/>
    <property type="project" value="InterPro"/>
</dbReference>
<dbReference type="GO" id="GO:0005975">
    <property type="term" value="P:carbohydrate metabolic process"/>
    <property type="evidence" value="ECO:0007669"/>
    <property type="project" value="InterPro"/>
</dbReference>
<dbReference type="GO" id="GO:0046167">
    <property type="term" value="P:glycerol-3-phosphate biosynthetic process"/>
    <property type="evidence" value="ECO:0007669"/>
    <property type="project" value="UniProtKB-UniRule"/>
</dbReference>
<dbReference type="GO" id="GO:0046168">
    <property type="term" value="P:glycerol-3-phosphate catabolic process"/>
    <property type="evidence" value="ECO:0007669"/>
    <property type="project" value="InterPro"/>
</dbReference>
<dbReference type="GO" id="GO:0006650">
    <property type="term" value="P:glycerophospholipid metabolic process"/>
    <property type="evidence" value="ECO:0007669"/>
    <property type="project" value="UniProtKB-UniRule"/>
</dbReference>
<dbReference type="GO" id="GO:0008654">
    <property type="term" value="P:phospholipid biosynthetic process"/>
    <property type="evidence" value="ECO:0007669"/>
    <property type="project" value="UniProtKB-KW"/>
</dbReference>
<dbReference type="FunFam" id="1.10.1040.10:FF:000001">
    <property type="entry name" value="Glycerol-3-phosphate dehydrogenase [NAD(P)+]"/>
    <property type="match status" value="1"/>
</dbReference>
<dbReference type="FunFam" id="3.40.50.720:FF:000019">
    <property type="entry name" value="Glycerol-3-phosphate dehydrogenase [NAD(P)+]"/>
    <property type="match status" value="1"/>
</dbReference>
<dbReference type="Gene3D" id="1.10.1040.10">
    <property type="entry name" value="N-(1-d-carboxylethyl)-l-norvaline Dehydrogenase, domain 2"/>
    <property type="match status" value="1"/>
</dbReference>
<dbReference type="Gene3D" id="3.40.50.720">
    <property type="entry name" value="NAD(P)-binding Rossmann-like Domain"/>
    <property type="match status" value="1"/>
</dbReference>
<dbReference type="HAMAP" id="MF_00394">
    <property type="entry name" value="NAD_Glyc3P_dehydrog"/>
    <property type="match status" value="1"/>
</dbReference>
<dbReference type="InterPro" id="IPR008927">
    <property type="entry name" value="6-PGluconate_DH-like_C_sf"/>
</dbReference>
<dbReference type="InterPro" id="IPR013328">
    <property type="entry name" value="6PGD_dom2"/>
</dbReference>
<dbReference type="InterPro" id="IPR006168">
    <property type="entry name" value="G3P_DH_NAD-dep"/>
</dbReference>
<dbReference type="InterPro" id="IPR006109">
    <property type="entry name" value="G3P_DH_NAD-dep_C"/>
</dbReference>
<dbReference type="InterPro" id="IPR011128">
    <property type="entry name" value="G3P_DH_NAD-dep_N"/>
</dbReference>
<dbReference type="InterPro" id="IPR036291">
    <property type="entry name" value="NAD(P)-bd_dom_sf"/>
</dbReference>
<dbReference type="NCBIfam" id="NF000940">
    <property type="entry name" value="PRK00094.1-2"/>
    <property type="match status" value="1"/>
</dbReference>
<dbReference type="NCBIfam" id="NF000942">
    <property type="entry name" value="PRK00094.1-4"/>
    <property type="match status" value="1"/>
</dbReference>
<dbReference type="PANTHER" id="PTHR11728">
    <property type="entry name" value="GLYCEROL-3-PHOSPHATE DEHYDROGENASE"/>
    <property type="match status" value="1"/>
</dbReference>
<dbReference type="PANTHER" id="PTHR11728:SF1">
    <property type="entry name" value="GLYCEROL-3-PHOSPHATE DEHYDROGENASE [NAD(+)] 2, CHLOROPLASTIC"/>
    <property type="match status" value="1"/>
</dbReference>
<dbReference type="Pfam" id="PF07479">
    <property type="entry name" value="NAD_Gly3P_dh_C"/>
    <property type="match status" value="1"/>
</dbReference>
<dbReference type="Pfam" id="PF01210">
    <property type="entry name" value="NAD_Gly3P_dh_N"/>
    <property type="match status" value="1"/>
</dbReference>
<dbReference type="PIRSF" id="PIRSF000114">
    <property type="entry name" value="Glycerol-3-P_dh"/>
    <property type="match status" value="1"/>
</dbReference>
<dbReference type="PRINTS" id="PR00077">
    <property type="entry name" value="GPDHDRGNASE"/>
</dbReference>
<dbReference type="SUPFAM" id="SSF48179">
    <property type="entry name" value="6-phosphogluconate dehydrogenase C-terminal domain-like"/>
    <property type="match status" value="1"/>
</dbReference>
<dbReference type="SUPFAM" id="SSF51735">
    <property type="entry name" value="NAD(P)-binding Rossmann-fold domains"/>
    <property type="match status" value="1"/>
</dbReference>
<dbReference type="PROSITE" id="PS00957">
    <property type="entry name" value="NAD_G3PDH"/>
    <property type="match status" value="1"/>
</dbReference>
<gene>
    <name evidence="1" type="primary">gpsA</name>
    <name type="ordered locus">Dde_3178</name>
</gene>
<accession>Q30WH4</accession>
<keyword id="KW-0963">Cytoplasm</keyword>
<keyword id="KW-0444">Lipid biosynthesis</keyword>
<keyword id="KW-0443">Lipid metabolism</keyword>
<keyword id="KW-0520">NAD</keyword>
<keyword id="KW-0521">NADP</keyword>
<keyword id="KW-0547">Nucleotide-binding</keyword>
<keyword id="KW-0560">Oxidoreductase</keyword>
<keyword id="KW-0594">Phospholipid biosynthesis</keyword>
<keyword id="KW-1208">Phospholipid metabolism</keyword>
<keyword id="KW-1185">Reference proteome</keyword>
<reference key="1">
    <citation type="journal article" date="2011" name="J. Bacteriol.">
        <title>Complete genome sequence and updated annotation of Desulfovibrio alaskensis G20.</title>
        <authorList>
            <person name="Hauser L.J."/>
            <person name="Land M.L."/>
            <person name="Brown S.D."/>
            <person name="Larimer F."/>
            <person name="Keller K.L."/>
            <person name="Rapp-Giles B.J."/>
            <person name="Price M.N."/>
            <person name="Lin M."/>
            <person name="Bruce D.C."/>
            <person name="Detter J.C."/>
            <person name="Tapia R."/>
            <person name="Han C.S."/>
            <person name="Goodwin L.A."/>
            <person name="Cheng J.F."/>
            <person name="Pitluck S."/>
            <person name="Copeland A."/>
            <person name="Lucas S."/>
            <person name="Nolan M."/>
            <person name="Lapidus A.L."/>
            <person name="Palumbo A.V."/>
            <person name="Wall J.D."/>
        </authorList>
    </citation>
    <scope>NUCLEOTIDE SEQUENCE [LARGE SCALE GENOMIC DNA]</scope>
    <source>
        <strain>ATCC BAA-1058 / DSM 17464 / G20</strain>
    </source>
</reference>
<feature type="chain" id="PRO_0000255307" description="Glycerol-3-phosphate dehydrogenase [NAD(P)+]">
    <location>
        <begin position="1"/>
        <end position="330"/>
    </location>
</feature>
<feature type="active site" description="Proton acceptor" evidence="1">
    <location>
        <position position="190"/>
    </location>
</feature>
<feature type="binding site" evidence="1">
    <location>
        <position position="10"/>
    </location>
    <ligand>
        <name>NADPH</name>
        <dbReference type="ChEBI" id="CHEBI:57783"/>
    </ligand>
</feature>
<feature type="binding site" evidence="1">
    <location>
        <position position="11"/>
    </location>
    <ligand>
        <name>NADPH</name>
        <dbReference type="ChEBI" id="CHEBI:57783"/>
    </ligand>
</feature>
<feature type="binding site" evidence="1">
    <location>
        <position position="31"/>
    </location>
    <ligand>
        <name>NADPH</name>
        <dbReference type="ChEBI" id="CHEBI:57783"/>
    </ligand>
</feature>
<feature type="binding site" evidence="1">
    <location>
        <position position="105"/>
    </location>
    <ligand>
        <name>NADPH</name>
        <dbReference type="ChEBI" id="CHEBI:57783"/>
    </ligand>
</feature>
<feature type="binding site" evidence="1">
    <location>
        <position position="105"/>
    </location>
    <ligand>
        <name>sn-glycerol 3-phosphate</name>
        <dbReference type="ChEBI" id="CHEBI:57597"/>
    </ligand>
</feature>
<feature type="binding site" evidence="1">
    <location>
        <position position="135"/>
    </location>
    <ligand>
        <name>sn-glycerol 3-phosphate</name>
        <dbReference type="ChEBI" id="CHEBI:57597"/>
    </ligand>
</feature>
<feature type="binding site" evidence="1">
    <location>
        <position position="137"/>
    </location>
    <ligand>
        <name>sn-glycerol 3-phosphate</name>
        <dbReference type="ChEBI" id="CHEBI:57597"/>
    </ligand>
</feature>
<feature type="binding site" evidence="1">
    <location>
        <position position="139"/>
    </location>
    <ligand>
        <name>NADPH</name>
        <dbReference type="ChEBI" id="CHEBI:57783"/>
    </ligand>
</feature>
<feature type="binding site" evidence="1">
    <location>
        <position position="190"/>
    </location>
    <ligand>
        <name>sn-glycerol 3-phosphate</name>
        <dbReference type="ChEBI" id="CHEBI:57597"/>
    </ligand>
</feature>
<feature type="binding site" evidence="1">
    <location>
        <position position="243"/>
    </location>
    <ligand>
        <name>sn-glycerol 3-phosphate</name>
        <dbReference type="ChEBI" id="CHEBI:57597"/>
    </ligand>
</feature>
<feature type="binding site" evidence="1">
    <location>
        <position position="253"/>
    </location>
    <ligand>
        <name>sn-glycerol 3-phosphate</name>
        <dbReference type="ChEBI" id="CHEBI:57597"/>
    </ligand>
</feature>
<feature type="binding site" evidence="1">
    <location>
        <position position="254"/>
    </location>
    <ligand>
        <name>NADPH</name>
        <dbReference type="ChEBI" id="CHEBI:57783"/>
    </ligand>
</feature>
<feature type="binding site" evidence="1">
    <location>
        <position position="254"/>
    </location>
    <ligand>
        <name>sn-glycerol 3-phosphate</name>
        <dbReference type="ChEBI" id="CHEBI:57597"/>
    </ligand>
</feature>
<feature type="binding site" evidence="1">
    <location>
        <position position="255"/>
    </location>
    <ligand>
        <name>sn-glycerol 3-phosphate</name>
        <dbReference type="ChEBI" id="CHEBI:57597"/>
    </ligand>
</feature>
<feature type="binding site" evidence="1">
    <location>
        <position position="278"/>
    </location>
    <ligand>
        <name>NADPH</name>
        <dbReference type="ChEBI" id="CHEBI:57783"/>
    </ligand>
</feature>
<feature type="binding site" evidence="1">
    <location>
        <position position="280"/>
    </location>
    <ligand>
        <name>NADPH</name>
        <dbReference type="ChEBI" id="CHEBI:57783"/>
    </ligand>
</feature>
<comment type="function">
    <text evidence="1">Catalyzes the reduction of the glycolytic intermediate dihydroxyacetone phosphate (DHAP) to sn-glycerol 3-phosphate (G3P), the key precursor for phospholipid synthesis.</text>
</comment>
<comment type="catalytic activity">
    <reaction evidence="1">
        <text>sn-glycerol 3-phosphate + NAD(+) = dihydroxyacetone phosphate + NADH + H(+)</text>
        <dbReference type="Rhea" id="RHEA:11092"/>
        <dbReference type="ChEBI" id="CHEBI:15378"/>
        <dbReference type="ChEBI" id="CHEBI:57540"/>
        <dbReference type="ChEBI" id="CHEBI:57597"/>
        <dbReference type="ChEBI" id="CHEBI:57642"/>
        <dbReference type="ChEBI" id="CHEBI:57945"/>
        <dbReference type="EC" id="1.1.1.94"/>
    </reaction>
    <physiologicalReaction direction="right-to-left" evidence="1">
        <dbReference type="Rhea" id="RHEA:11094"/>
    </physiologicalReaction>
</comment>
<comment type="catalytic activity">
    <reaction evidence="1">
        <text>sn-glycerol 3-phosphate + NADP(+) = dihydroxyacetone phosphate + NADPH + H(+)</text>
        <dbReference type="Rhea" id="RHEA:11096"/>
        <dbReference type="ChEBI" id="CHEBI:15378"/>
        <dbReference type="ChEBI" id="CHEBI:57597"/>
        <dbReference type="ChEBI" id="CHEBI:57642"/>
        <dbReference type="ChEBI" id="CHEBI:57783"/>
        <dbReference type="ChEBI" id="CHEBI:58349"/>
        <dbReference type="EC" id="1.1.1.94"/>
    </reaction>
    <physiologicalReaction direction="right-to-left" evidence="1">
        <dbReference type="Rhea" id="RHEA:11098"/>
    </physiologicalReaction>
</comment>
<comment type="pathway">
    <text evidence="1">Membrane lipid metabolism; glycerophospholipid metabolism.</text>
</comment>
<comment type="subcellular location">
    <subcellularLocation>
        <location evidence="1">Cytoplasm</location>
    </subcellularLocation>
</comment>
<comment type="similarity">
    <text evidence="1">Belongs to the NAD-dependent glycerol-3-phosphate dehydrogenase family.</text>
</comment>
<name>GPDA_OLEA2</name>
<organism>
    <name type="scientific">Oleidesulfovibrio alaskensis (strain ATCC BAA-1058 / DSM 17464 / G20)</name>
    <name type="common">Desulfovibrio alaskensis</name>
    <dbReference type="NCBI Taxonomy" id="207559"/>
    <lineage>
        <taxon>Bacteria</taxon>
        <taxon>Pseudomonadati</taxon>
        <taxon>Thermodesulfobacteriota</taxon>
        <taxon>Desulfovibrionia</taxon>
        <taxon>Desulfovibrionales</taxon>
        <taxon>Desulfovibrionaceae</taxon>
        <taxon>Oleidesulfovibrio</taxon>
    </lineage>
</organism>